<evidence type="ECO:0000250" key="1"/>
<evidence type="ECO:0000305" key="2"/>
<feature type="transit peptide" description="Mitochondrion">
    <location>
        <begin position="1"/>
        <end position="18"/>
    </location>
</feature>
<feature type="chain" id="PRO_0000018544" description="NAD-dependent malic enzyme 59 kDa isoform, mitochondrial">
    <location>
        <begin position="19"/>
        <end position="601"/>
    </location>
</feature>
<feature type="active site" description="Proton donor" evidence="1">
    <location>
        <position position="129"/>
    </location>
</feature>
<feature type="active site" description="Proton acceptor" evidence="1">
    <location>
        <position position="200"/>
    </location>
</feature>
<feature type="binding site" evidence="1">
    <location>
        <position position="182"/>
    </location>
    <ligand>
        <name>NAD(+)</name>
        <dbReference type="ChEBI" id="CHEBI:57540"/>
    </ligand>
</feature>
<feature type="binding site" evidence="1">
    <location>
        <position position="271"/>
    </location>
    <ligand>
        <name>a divalent metal cation</name>
        <dbReference type="ChEBI" id="CHEBI:60240"/>
    </ligand>
</feature>
<feature type="binding site" evidence="1">
    <location>
        <position position="272"/>
    </location>
    <ligand>
        <name>a divalent metal cation</name>
        <dbReference type="ChEBI" id="CHEBI:60240"/>
    </ligand>
</feature>
<feature type="binding site" evidence="1">
    <location>
        <position position="295"/>
    </location>
    <ligand>
        <name>a divalent metal cation</name>
        <dbReference type="ChEBI" id="CHEBI:60240"/>
    </ligand>
</feature>
<feature type="binding site" evidence="1">
    <location>
        <position position="295"/>
    </location>
    <ligand>
        <name>NAD(+)</name>
        <dbReference type="ChEBI" id="CHEBI:57540"/>
    </ligand>
</feature>
<feature type="binding site" evidence="1">
    <location>
        <position position="444"/>
    </location>
    <ligand>
        <name>NAD(+)</name>
        <dbReference type="ChEBI" id="CHEBI:57540"/>
    </ligand>
</feature>
<feature type="site" description="Important for activity" evidence="1">
    <location>
        <position position="295"/>
    </location>
</feature>
<accession>P37225</accession>
<organism>
    <name type="scientific">Solanum tuberosum</name>
    <name type="common">Potato</name>
    <dbReference type="NCBI Taxonomy" id="4113"/>
    <lineage>
        <taxon>Eukaryota</taxon>
        <taxon>Viridiplantae</taxon>
        <taxon>Streptophyta</taxon>
        <taxon>Embryophyta</taxon>
        <taxon>Tracheophyta</taxon>
        <taxon>Spermatophyta</taxon>
        <taxon>Magnoliopsida</taxon>
        <taxon>eudicotyledons</taxon>
        <taxon>Gunneridae</taxon>
        <taxon>Pentapetalae</taxon>
        <taxon>asterids</taxon>
        <taxon>lamiids</taxon>
        <taxon>Solanales</taxon>
        <taxon>Solanaceae</taxon>
        <taxon>Solanoideae</taxon>
        <taxon>Solaneae</taxon>
        <taxon>Solanum</taxon>
    </lineage>
</organism>
<comment type="catalytic activity">
    <reaction>
        <text>(S)-malate + NAD(+) = pyruvate + CO2 + NADH</text>
        <dbReference type="Rhea" id="RHEA:12653"/>
        <dbReference type="ChEBI" id="CHEBI:15361"/>
        <dbReference type="ChEBI" id="CHEBI:15589"/>
        <dbReference type="ChEBI" id="CHEBI:16526"/>
        <dbReference type="ChEBI" id="CHEBI:57540"/>
        <dbReference type="ChEBI" id="CHEBI:57945"/>
        <dbReference type="EC" id="1.1.1.39"/>
    </reaction>
</comment>
<comment type="cofactor">
    <cofactor evidence="1">
        <name>Mg(2+)</name>
        <dbReference type="ChEBI" id="CHEBI:18420"/>
    </cofactor>
    <cofactor evidence="1">
        <name>Mn(2+)</name>
        <dbReference type="ChEBI" id="CHEBI:29035"/>
    </cofactor>
    <text evidence="1">Divalent metal cations. Prefers magnesium or manganese.</text>
</comment>
<comment type="subunit">
    <text>Heterodimer of two related subunits.</text>
</comment>
<comment type="subcellular location">
    <subcellularLocation>
        <location>Mitochondrion matrix</location>
    </subcellularLocation>
</comment>
<comment type="similarity">
    <text evidence="2">Belongs to the malic enzymes family.</text>
</comment>
<keyword id="KW-0903">Direct protein sequencing</keyword>
<keyword id="KW-0479">Metal-binding</keyword>
<keyword id="KW-0496">Mitochondrion</keyword>
<keyword id="KW-0520">NAD</keyword>
<keyword id="KW-0560">Oxidoreductase</keyword>
<keyword id="KW-1185">Reference proteome</keyword>
<keyword id="KW-0809">Transit peptide</keyword>
<name>MAON_SOLTU</name>
<dbReference type="EC" id="1.1.1.39"/>
<dbReference type="EMBL" id="Z23002">
    <property type="protein sequence ID" value="CAA80547.1"/>
    <property type="molecule type" value="mRNA"/>
</dbReference>
<dbReference type="PIR" id="A53318">
    <property type="entry name" value="A53318"/>
</dbReference>
<dbReference type="SMR" id="P37225"/>
<dbReference type="FunCoup" id="P37225">
    <property type="interactions" value="1428"/>
</dbReference>
<dbReference type="IntAct" id="P37225">
    <property type="interactions" value="1"/>
</dbReference>
<dbReference type="STRING" id="4113.P37225"/>
<dbReference type="PaxDb" id="4113-PGSC0003DMT400000066"/>
<dbReference type="eggNOG" id="KOG1257">
    <property type="taxonomic scope" value="Eukaryota"/>
</dbReference>
<dbReference type="InParanoid" id="P37225"/>
<dbReference type="SABIO-RK" id="P37225"/>
<dbReference type="Proteomes" id="UP000011115">
    <property type="component" value="Unassembled WGS sequence"/>
</dbReference>
<dbReference type="ExpressionAtlas" id="P37225">
    <property type="expression patterns" value="baseline and differential"/>
</dbReference>
<dbReference type="GO" id="GO:0005759">
    <property type="term" value="C:mitochondrial matrix"/>
    <property type="evidence" value="ECO:0007669"/>
    <property type="project" value="UniProtKB-SubCell"/>
</dbReference>
<dbReference type="GO" id="GO:0004471">
    <property type="term" value="F:malate dehydrogenase (decarboxylating) (NAD+) activity"/>
    <property type="evidence" value="ECO:0000318"/>
    <property type="project" value="GO_Central"/>
</dbReference>
<dbReference type="GO" id="GO:0046872">
    <property type="term" value="F:metal ion binding"/>
    <property type="evidence" value="ECO:0007669"/>
    <property type="project" value="UniProtKB-KW"/>
</dbReference>
<dbReference type="GO" id="GO:0051287">
    <property type="term" value="F:NAD binding"/>
    <property type="evidence" value="ECO:0007669"/>
    <property type="project" value="InterPro"/>
</dbReference>
<dbReference type="GO" id="GO:0006108">
    <property type="term" value="P:malate metabolic process"/>
    <property type="evidence" value="ECO:0000318"/>
    <property type="project" value="GO_Central"/>
</dbReference>
<dbReference type="GO" id="GO:0006090">
    <property type="term" value="P:pyruvate metabolic process"/>
    <property type="evidence" value="ECO:0000318"/>
    <property type="project" value="GO_Central"/>
</dbReference>
<dbReference type="CDD" id="cd05312">
    <property type="entry name" value="NAD_bind_1_malic_enz"/>
    <property type="match status" value="1"/>
</dbReference>
<dbReference type="FunFam" id="3.40.50.10380:FF:000005">
    <property type="entry name" value="Malic enzyme"/>
    <property type="match status" value="1"/>
</dbReference>
<dbReference type="FunFam" id="3.40.50.720:FF:000237">
    <property type="entry name" value="Malic enzyme"/>
    <property type="match status" value="1"/>
</dbReference>
<dbReference type="Gene3D" id="3.40.50.10380">
    <property type="entry name" value="Malic enzyme, N-terminal domain"/>
    <property type="match status" value="1"/>
</dbReference>
<dbReference type="Gene3D" id="3.40.50.720">
    <property type="entry name" value="NAD(P)-binding Rossmann-like Domain"/>
    <property type="match status" value="1"/>
</dbReference>
<dbReference type="InterPro" id="IPR046346">
    <property type="entry name" value="Aminoacid_DH-like_N_sf"/>
</dbReference>
<dbReference type="InterPro" id="IPR015884">
    <property type="entry name" value="Malic_enzyme_CS"/>
</dbReference>
<dbReference type="InterPro" id="IPR012301">
    <property type="entry name" value="Malic_N_dom"/>
</dbReference>
<dbReference type="InterPro" id="IPR037062">
    <property type="entry name" value="Malic_N_dom_sf"/>
</dbReference>
<dbReference type="InterPro" id="IPR012302">
    <property type="entry name" value="Malic_NAD-bd"/>
</dbReference>
<dbReference type="InterPro" id="IPR001891">
    <property type="entry name" value="Malic_OxRdtase"/>
</dbReference>
<dbReference type="InterPro" id="IPR036291">
    <property type="entry name" value="NAD(P)-bd_dom_sf"/>
</dbReference>
<dbReference type="NCBIfam" id="NF010052">
    <property type="entry name" value="PRK13529.1"/>
    <property type="match status" value="1"/>
</dbReference>
<dbReference type="PANTHER" id="PTHR23406">
    <property type="entry name" value="MALIC ENZYME-RELATED"/>
    <property type="match status" value="1"/>
</dbReference>
<dbReference type="PANTHER" id="PTHR23406:SF73">
    <property type="entry name" value="NAD-DEPENDENT MALIC ENZYME 2, MITOCHONDRIAL"/>
    <property type="match status" value="1"/>
</dbReference>
<dbReference type="Pfam" id="PF00390">
    <property type="entry name" value="malic"/>
    <property type="match status" value="1"/>
</dbReference>
<dbReference type="Pfam" id="PF03949">
    <property type="entry name" value="Malic_M"/>
    <property type="match status" value="1"/>
</dbReference>
<dbReference type="PIRSF" id="PIRSF000106">
    <property type="entry name" value="ME"/>
    <property type="match status" value="1"/>
</dbReference>
<dbReference type="PRINTS" id="PR00072">
    <property type="entry name" value="MALOXRDTASE"/>
</dbReference>
<dbReference type="SMART" id="SM01274">
    <property type="entry name" value="malic"/>
    <property type="match status" value="1"/>
</dbReference>
<dbReference type="SMART" id="SM00919">
    <property type="entry name" value="Malic_M"/>
    <property type="match status" value="1"/>
</dbReference>
<dbReference type="SUPFAM" id="SSF53223">
    <property type="entry name" value="Aminoacid dehydrogenase-like, N-terminal domain"/>
    <property type="match status" value="1"/>
</dbReference>
<dbReference type="SUPFAM" id="SSF51735">
    <property type="entry name" value="NAD(P)-binding Rossmann-fold domains"/>
    <property type="match status" value="1"/>
</dbReference>
<dbReference type="PROSITE" id="PS00331">
    <property type="entry name" value="MALIC_ENZYMES"/>
    <property type="match status" value="1"/>
</dbReference>
<reference key="1">
    <citation type="journal article" date="1994" name="J. Biol. Chem.">
        <title>Plant mitochondrial NAD+-dependent malic enzyme. cDNA cloning, deduced primary structure of the 59- and 62-kDa subunits, import, gene complexity and expression analysis.</title>
        <authorList>
            <person name="Winning B.M."/>
            <person name="Bourguignon J."/>
            <person name="Leaver C.J."/>
        </authorList>
    </citation>
    <scope>NUCLEOTIDE SEQUENCE [MRNA]</scope>
    <scope>PARTIAL PROTEIN SEQUENCE</scope>
    <source>
        <strain>cv. Desiree</strain>
        <tissue>Leaf</tissue>
    </source>
</reference>
<protein>
    <recommendedName>
        <fullName>NAD-dependent malic enzyme 59 kDa isoform, mitochondrial</fullName>
        <shortName>NAD-ME</shortName>
        <ecNumber>1.1.1.39</ecNumber>
    </recommendedName>
</protein>
<sequence>MWRVARSAASTFRRTRRLSTAISAPCIVHKRGADILHDPWFNKDTGFPMTERDRLGLRGLLPPRVISFEQQYDRFMESFRSLEKNTEGQPDSVVSLAKWRILNRLHDRNETLYYRVLIDNIKDFAPIIYTPTVGLVCQNYSGLFRRPRGMYFSAKDKGEMMSMIFNWPSTQVDMIVLTDGSRILGLGDLGVQGIGIPIGKLDMYVAAAGINPQRVLPVMLDVGTNNQKLLEDPLYLGLRQPRLEGEEYLSIVDEFVEAVHARWPKAVVQFEDFQAKWAFETLDRYRKKFCMFNDDIQGTAGVALAGLLGTVRAQGRPLTDFANQKIVVVGAGSAGLGVLKMALQAVSRMTGPSADPHFFLLDKNGLITKDRKDIDPAALPFAKAHHEIEGLGLQEGAGLAEVVKKVKPHVLLGLSGVGGIFHEEVLRAMKESDSVRPAIFAMSNPTNNAECCPVDAFKLAGEDIVFASGSPFANVDLGNGKIGHVNQANNMYLFPGIGLGALLSGARNISDTMLEAAAECLASYMSDDEINRGILYPSIDDIRDITAEVGAAVLRAAVAEDLAEGHGDVGVKELQHMSKEETIEHVRQNMWYPVYGPLVHE</sequence>
<proteinExistence type="evidence at protein level"/>